<reference key="1">
    <citation type="journal article" date="1988" name="Gene">
        <title>Structural analysis of mouse S-antigen.</title>
        <authorList>
            <person name="Tsuda M."/>
            <person name="Syed M."/>
            <person name="Bugra K."/>
            <person name="Whelan J.P."/>
            <person name="McGinnis J.F."/>
            <person name="Shinohara T."/>
        </authorList>
    </citation>
    <scope>NUCLEOTIDE SEQUENCE [MRNA]</scope>
</reference>
<reference key="2">
    <citation type="journal article" date="2004" name="Genome Res.">
        <title>The status, quality, and expansion of the NIH full-length cDNA project: the Mammalian Gene Collection (MGC).</title>
        <authorList>
            <consortium name="The MGC Project Team"/>
        </authorList>
    </citation>
    <scope>NUCLEOTIDE SEQUENCE [LARGE SCALE MRNA]</scope>
    <source>
        <tissue>Eye</tissue>
    </source>
</reference>
<reference key="3">
    <citation type="journal article" date="1997" name="Nature">
        <title>Prolonged photoresponses in transgenic mouse rods lacking arrestin.</title>
        <authorList>
            <person name="Xu J."/>
            <person name="Dodd R.L."/>
            <person name="Makino C.L."/>
            <person name="Simon M.I."/>
            <person name="Baylor D.A."/>
            <person name="Chen J."/>
        </authorList>
    </citation>
    <scope>DISRUPTION PHENOTYPE</scope>
    <scope>FUNCTION</scope>
    <scope>TISSUE SPECIFICITY</scope>
</reference>
<reference key="4">
    <citation type="journal article" date="2006" name="J. Neurosci.">
        <title>Deactivation of phosphorylated and nonphosphorylated rhodopsin by arrestin splice variants.</title>
        <authorList>
            <person name="Burns M.E."/>
            <person name="Mendez A."/>
            <person name="Chen C.K."/>
            <person name="Almuete A."/>
            <person name="Quillinan N."/>
            <person name="Simon M.I."/>
            <person name="Baylor D.A."/>
            <person name="Chen J."/>
        </authorList>
    </citation>
    <scope>DISRUPTION PHENOTYPE</scope>
    <scope>FUNCTION</scope>
    <scope>SUBCELLULAR LOCATION</scope>
    <scope>TISSUE SPECIFICITY</scope>
</reference>
<reference key="5">
    <citation type="journal article" date="2011" name="Biochemistry">
        <title>Robust self-association is a common feature of mammalian visual arrestin-1.</title>
        <authorList>
            <person name="Kim M."/>
            <person name="Hanson S.M."/>
            <person name="Vishnivetskiy S.A."/>
            <person name="Song X."/>
            <person name="Cleghorn W.M."/>
            <person name="Hubbell W.L."/>
            <person name="Gurevich V.V."/>
        </authorList>
    </citation>
    <scope>SUBUNIT</scope>
    <scope>MUTAGENESIS OF PHE-86; PHE-198 AND ALA-349</scope>
</reference>
<reference evidence="11" key="6">
    <citation type="journal article" date="2015" name="Nature">
        <title>Crystal structure of rhodopsin bound to arrestin by femtosecond X-ray laser.</title>
        <authorList>
            <person name="Kang Y."/>
            <person name="Zhou X.E."/>
            <person name="Gao X."/>
            <person name="He Y."/>
            <person name="Liu W."/>
            <person name="Ishchenko A."/>
            <person name="Barty A."/>
            <person name="White T.A."/>
            <person name="Yefanov O."/>
            <person name="Han G.W."/>
            <person name="Xu Q."/>
            <person name="de Waal P.W."/>
            <person name="Ke J."/>
            <person name="Tan M.H."/>
            <person name="Zhang C."/>
            <person name="Moeller A."/>
            <person name="West G.M."/>
            <person name="Pascal B.D."/>
            <person name="Van Eps N."/>
            <person name="Caro L.N."/>
            <person name="Vishnivetskiy S.A."/>
            <person name="Lee R.J."/>
            <person name="Suino-Powell K.M."/>
            <person name="Gu X."/>
            <person name="Pal K."/>
            <person name="Ma J."/>
            <person name="Zhi X."/>
            <person name="Boutet S."/>
            <person name="Williams G.J."/>
            <person name="Messerschmidt M."/>
            <person name="Gati C."/>
            <person name="Zatsepin N.A."/>
            <person name="Wang D."/>
            <person name="James D."/>
            <person name="Basu S."/>
            <person name="Roy-Chowdhury S."/>
            <person name="Conrad C.E."/>
            <person name="Coe J."/>
            <person name="Liu H."/>
            <person name="Lisova S."/>
            <person name="Kupitz C."/>
            <person name="Grotjohann I."/>
            <person name="Fromme R."/>
            <person name="Jiang Y."/>
            <person name="Tan M."/>
            <person name="Yang H."/>
            <person name="Li J."/>
            <person name="Wang M."/>
            <person name="Zheng Z."/>
            <person name="Li D."/>
            <person name="Howe N."/>
            <person name="Zhao Y."/>
            <person name="Standfuss J."/>
            <person name="Diederichs K."/>
            <person name="Dong Y."/>
            <person name="Potter C.S."/>
            <person name="Carragher B."/>
            <person name="Caffrey M."/>
            <person name="Jiang H."/>
            <person name="Chapman H.N."/>
            <person name="Spence J.C."/>
            <person name="Fromme P."/>
            <person name="Weierstall U."/>
            <person name="Ernst O.P."/>
            <person name="Katritch V."/>
            <person name="Gurevich V.V."/>
            <person name="Griffin P.R."/>
            <person name="Hubbell W.L."/>
            <person name="Stevens R.C."/>
            <person name="Cherezov V."/>
            <person name="Melcher K."/>
            <person name="Xu H.E."/>
        </authorList>
    </citation>
    <scope>X-RAY CRYSTALLOGRAPHY (3.30 ANGSTROMS) OF 10-392 IN COMPLEX WITH RHO</scope>
    <scope>MUTAGENESIS OF 374-LEU--PHE-376</scope>
</reference>
<reference evidence="12" key="7">
    <citation type="journal article" date="2017" name="Cell">
        <title>Identification of Phosphorylation Codes for Arrestin Recruitment by G Protein-Coupled Receptors.</title>
        <authorList>
            <person name="Zhou X.E."/>
            <person name="He Y."/>
            <person name="de Waal P.W."/>
            <person name="Gao X."/>
            <person name="Kang Y."/>
            <person name="Van Eps N."/>
            <person name="Yin Y."/>
            <person name="Pal K."/>
            <person name="Goswami D."/>
            <person name="White T.A."/>
            <person name="Barty A."/>
            <person name="Latorraca N.R."/>
            <person name="Chapman H.N."/>
            <person name="Hubbell W.L."/>
            <person name="Dror R.O."/>
            <person name="Stevens R.C."/>
            <person name="Cherezov V."/>
            <person name="Gurevich V.V."/>
            <person name="Griffin P.R."/>
            <person name="Ernst O.P."/>
            <person name="Melcher K."/>
            <person name="Xu H.E."/>
        </authorList>
    </citation>
    <scope>X-RAY CRYSTALLOGRAPHY (3.01 ANGSTROMS) OF 10-392 IN COMPLEX WITH RHO</scope>
</reference>
<gene>
    <name type="primary">Sag</name>
</gene>
<organism>
    <name type="scientific">Mus musculus</name>
    <name type="common">Mouse</name>
    <dbReference type="NCBI Taxonomy" id="10090"/>
    <lineage>
        <taxon>Eukaryota</taxon>
        <taxon>Metazoa</taxon>
        <taxon>Chordata</taxon>
        <taxon>Craniata</taxon>
        <taxon>Vertebrata</taxon>
        <taxon>Euteleostomi</taxon>
        <taxon>Mammalia</taxon>
        <taxon>Eutheria</taxon>
        <taxon>Euarchontoglires</taxon>
        <taxon>Glires</taxon>
        <taxon>Rodentia</taxon>
        <taxon>Myomorpha</taxon>
        <taxon>Muroidea</taxon>
        <taxon>Muridae</taxon>
        <taxon>Murinae</taxon>
        <taxon>Mus</taxon>
        <taxon>Mus</taxon>
    </lineage>
</organism>
<sequence length="403" mass="44930">MAACGKTNKSHVIFKKVSRDKSVTIYLGKRDYVDHVSQVEPVDGVVLVDPELVKGKKVYVTLTCAFRYGQEDIDVMGLTFRRDLYFSRVQVYPPVGAMSVLTQLQESLLKKLGDNTYPFLLTFPDYLPCSVMLQPAPQDVGKSCGVDFEVKAFASDITDPEEDKIPKKSSVRLLIRKVQHAPPEMGPQPSAEASWQFFMSDKPLNLSVSLSKEIYFHGEPIPVTVTVTNNTDKVVKKIKVSVEQIANVVLYSSDYYVKPVASEETQEKVQPNSTLTKTLVLVPLLANNRERRGIALDGKIKHEDTNLASSTIIKEGIDRTVMGILVSYHIKVKLTVSGFLGELTSSEVATEVPFRLMHPQPEDPAKESVQDENLVFEEFARQNLKDTGENTEGKKDEDAGQDE</sequence>
<protein>
    <recommendedName>
        <fullName>S-arrestin</fullName>
    </recommendedName>
    <alternativeName>
        <fullName>48 kDa protein</fullName>
    </alternativeName>
    <alternativeName>
        <fullName>Retinal S-antigen</fullName>
        <shortName>S-AG</shortName>
    </alternativeName>
    <alternativeName>
        <fullName>Rod photoreceptor arrestin</fullName>
    </alternativeName>
</protein>
<name>ARRS_MOUSE</name>
<dbReference type="EMBL" id="M24086">
    <property type="protein sequence ID" value="AAA40090.1"/>
    <property type="molecule type" value="mRNA"/>
</dbReference>
<dbReference type="EMBL" id="BC016498">
    <property type="protein sequence ID" value="AAH16498.1"/>
    <property type="molecule type" value="mRNA"/>
</dbReference>
<dbReference type="CCDS" id="CCDS35656.1"/>
<dbReference type="PIR" id="JS0066">
    <property type="entry name" value="JS0066"/>
</dbReference>
<dbReference type="RefSeq" id="NP_033144.1">
    <property type="nucleotide sequence ID" value="NM_009118.2"/>
</dbReference>
<dbReference type="RefSeq" id="XP_030108187.1">
    <property type="nucleotide sequence ID" value="XM_030252327.2"/>
</dbReference>
<dbReference type="PDB" id="4ZWJ">
    <property type="method" value="X-ray"/>
    <property type="resolution" value="3.30 A"/>
    <property type="chains" value="A/B/C/D=10-392"/>
</dbReference>
<dbReference type="PDB" id="5DGY">
    <property type="method" value="X-ray"/>
    <property type="resolution" value="7.70 A"/>
    <property type="chains" value="A/B/C/D=10-392"/>
</dbReference>
<dbReference type="PDB" id="5W0P">
    <property type="method" value="X-ray"/>
    <property type="resolution" value="3.01 A"/>
    <property type="chains" value="A/B/C/D=10-392"/>
</dbReference>
<dbReference type="PDBsum" id="4ZWJ"/>
<dbReference type="PDBsum" id="5DGY"/>
<dbReference type="PDBsum" id="5W0P"/>
<dbReference type="SMR" id="P20443"/>
<dbReference type="BioGRID" id="203065">
    <property type="interactions" value="2"/>
</dbReference>
<dbReference type="FunCoup" id="P20443">
    <property type="interactions" value="88"/>
</dbReference>
<dbReference type="IntAct" id="P20443">
    <property type="interactions" value="1"/>
</dbReference>
<dbReference type="STRING" id="10090.ENSMUSP00000076948"/>
<dbReference type="GlyGen" id="P20443">
    <property type="glycosylation" value="1 site"/>
</dbReference>
<dbReference type="iPTMnet" id="P20443"/>
<dbReference type="PhosphoSitePlus" id="P20443"/>
<dbReference type="PaxDb" id="10090-ENSMUSP00000076948"/>
<dbReference type="ProteomicsDB" id="281805"/>
<dbReference type="Antibodypedia" id="11899">
    <property type="antibodies" value="266 antibodies from 23 providers"/>
</dbReference>
<dbReference type="DNASU" id="20215"/>
<dbReference type="Ensembl" id="ENSMUST00000077772.12">
    <property type="protein sequence ID" value="ENSMUSP00000076948.6"/>
    <property type="gene ID" value="ENSMUSG00000056055.15"/>
</dbReference>
<dbReference type="GeneID" id="20215"/>
<dbReference type="KEGG" id="mmu:20215"/>
<dbReference type="UCSC" id="uc007bxp.1">
    <property type="organism name" value="mouse"/>
</dbReference>
<dbReference type="AGR" id="MGI:98227"/>
<dbReference type="CTD" id="6295"/>
<dbReference type="MGI" id="MGI:98227">
    <property type="gene designation" value="Sag"/>
</dbReference>
<dbReference type="VEuPathDB" id="HostDB:ENSMUSG00000056055"/>
<dbReference type="eggNOG" id="KOG3865">
    <property type="taxonomic scope" value="Eukaryota"/>
</dbReference>
<dbReference type="GeneTree" id="ENSGT00950000182887"/>
<dbReference type="HOGENOM" id="CLU_033484_0_0_1"/>
<dbReference type="InParanoid" id="P20443"/>
<dbReference type="OMA" id="QPAPQDM"/>
<dbReference type="OrthoDB" id="298939at2759"/>
<dbReference type="PhylomeDB" id="P20443"/>
<dbReference type="TreeFam" id="TF314260"/>
<dbReference type="Reactome" id="R-MMU-2514859">
    <property type="pathway name" value="Inactivation, recovery and regulation of the phototransduction cascade"/>
</dbReference>
<dbReference type="BioGRID-ORCS" id="20215">
    <property type="hits" value="2 hits in 78 CRISPR screens"/>
</dbReference>
<dbReference type="ChiTaRS" id="Sag">
    <property type="organism name" value="mouse"/>
</dbReference>
<dbReference type="EvolutionaryTrace" id="P20443"/>
<dbReference type="PRO" id="PR:P20443"/>
<dbReference type="Proteomes" id="UP000000589">
    <property type="component" value="Chromosome 1"/>
</dbReference>
<dbReference type="RNAct" id="P20443">
    <property type="molecule type" value="protein"/>
</dbReference>
<dbReference type="Bgee" id="ENSMUSG00000056055">
    <property type="expression patterns" value="Expressed in retinal neural layer and 55 other cell types or tissues"/>
</dbReference>
<dbReference type="ExpressionAtlas" id="P20443">
    <property type="expression patterns" value="baseline and differential"/>
</dbReference>
<dbReference type="GO" id="GO:0016020">
    <property type="term" value="C:membrane"/>
    <property type="evidence" value="ECO:0007669"/>
    <property type="project" value="UniProtKB-SubCell"/>
</dbReference>
<dbReference type="GO" id="GO:0001917">
    <property type="term" value="C:photoreceptor inner segment"/>
    <property type="evidence" value="ECO:0000314"/>
    <property type="project" value="MGI"/>
</dbReference>
<dbReference type="GO" id="GO:0001750">
    <property type="term" value="C:photoreceptor outer segment"/>
    <property type="evidence" value="ECO:0000314"/>
    <property type="project" value="MGI"/>
</dbReference>
<dbReference type="GO" id="GO:0002046">
    <property type="term" value="F:opsin binding"/>
    <property type="evidence" value="ECO:0000314"/>
    <property type="project" value="MGI"/>
</dbReference>
<dbReference type="GO" id="GO:0051219">
    <property type="term" value="F:phosphoprotein binding"/>
    <property type="evidence" value="ECO:0000314"/>
    <property type="project" value="MGI"/>
</dbReference>
<dbReference type="GO" id="GO:0030507">
    <property type="term" value="F:spectrin binding"/>
    <property type="evidence" value="ECO:0000266"/>
    <property type="project" value="MGI"/>
</dbReference>
<dbReference type="GO" id="GO:0007165">
    <property type="term" value="P:signal transduction"/>
    <property type="evidence" value="ECO:0007669"/>
    <property type="project" value="InterPro"/>
</dbReference>
<dbReference type="FunFam" id="2.60.40.840:FF:000002">
    <property type="entry name" value="Arrestin 3"/>
    <property type="match status" value="1"/>
</dbReference>
<dbReference type="FunFam" id="2.60.40.640:FF:000011">
    <property type="entry name" value="S-arrestin isoform X2"/>
    <property type="match status" value="1"/>
</dbReference>
<dbReference type="Gene3D" id="2.60.40.640">
    <property type="match status" value="1"/>
</dbReference>
<dbReference type="Gene3D" id="2.60.40.840">
    <property type="match status" value="1"/>
</dbReference>
<dbReference type="InterPro" id="IPR000698">
    <property type="entry name" value="Arrestin"/>
</dbReference>
<dbReference type="InterPro" id="IPR014752">
    <property type="entry name" value="Arrestin-like_C"/>
</dbReference>
<dbReference type="InterPro" id="IPR011021">
    <property type="entry name" value="Arrestin-like_N"/>
</dbReference>
<dbReference type="InterPro" id="IPR011022">
    <property type="entry name" value="Arrestin_C-like"/>
</dbReference>
<dbReference type="InterPro" id="IPR017864">
    <property type="entry name" value="Arrestin_CS"/>
</dbReference>
<dbReference type="InterPro" id="IPR014753">
    <property type="entry name" value="Arrestin_N"/>
</dbReference>
<dbReference type="InterPro" id="IPR014756">
    <property type="entry name" value="Ig_E-set"/>
</dbReference>
<dbReference type="PANTHER" id="PTHR11792">
    <property type="entry name" value="ARRESTIN"/>
    <property type="match status" value="1"/>
</dbReference>
<dbReference type="PANTHER" id="PTHR11792:SF15">
    <property type="entry name" value="S-ARRESTIN"/>
    <property type="match status" value="1"/>
</dbReference>
<dbReference type="Pfam" id="PF02752">
    <property type="entry name" value="Arrestin_C"/>
    <property type="match status" value="1"/>
</dbReference>
<dbReference type="Pfam" id="PF00339">
    <property type="entry name" value="Arrestin_N"/>
    <property type="match status" value="1"/>
</dbReference>
<dbReference type="PRINTS" id="PR00309">
    <property type="entry name" value="ARRESTIN"/>
</dbReference>
<dbReference type="SMART" id="SM01017">
    <property type="entry name" value="Arrestin_C"/>
    <property type="match status" value="1"/>
</dbReference>
<dbReference type="SUPFAM" id="SSF81296">
    <property type="entry name" value="E set domains"/>
    <property type="match status" value="2"/>
</dbReference>
<dbReference type="PROSITE" id="PS00295">
    <property type="entry name" value="ARRESTINS"/>
    <property type="match status" value="1"/>
</dbReference>
<keyword id="KW-0002">3D-structure</keyword>
<keyword id="KW-0966">Cell projection</keyword>
<keyword id="KW-0472">Membrane</keyword>
<keyword id="KW-0597">Phosphoprotein</keyword>
<keyword id="KW-1185">Reference proteome</keyword>
<feature type="chain" id="PRO_0000205187" description="S-arrestin">
    <location>
        <begin position="1"/>
        <end position="403"/>
    </location>
</feature>
<feature type="region of interest" description="Interaction with RHO" evidence="8">
    <location>
        <begin position="11"/>
        <end position="19"/>
    </location>
</feature>
<feature type="region of interest" description="Disordered" evidence="4">
    <location>
        <begin position="381"/>
        <end position="403"/>
    </location>
</feature>
<feature type="modified residue" description="Phosphothreonine" evidence="3">
    <location>
        <position position="231"/>
    </location>
</feature>
<feature type="mutagenesis site" description="Abrogates tetramerization, reduces dimerization, does not affect binding to microtubules and to phosphorylated light-activated rhodopsin; when associated with A-198, or with A-198 and V-349." evidence="6">
    <original>F</original>
    <variation>A</variation>
    <location>
        <position position="86"/>
    </location>
</feature>
<feature type="mutagenesis site" description="Abrogates tetramerization, reduces dimerization, does not affect binding to microtubules and to phosphorylated light-activated rhodopsin; when associated with A-86, or with A-86 and V-349." evidence="6">
    <original>F</original>
    <variation>A</variation>
    <location>
        <position position="198"/>
    </location>
</feature>
<feature type="mutagenesis site" description="Abrogates tetramerization, reduces dimerization, does not affect binding to microtubules and to phosphorylated light-activated rhodopsin; when associated with A-86 and A-198." evidence="6">
    <original>A</original>
    <variation>V</variation>
    <location>
        <position position="349"/>
    </location>
</feature>
<feature type="mutagenesis site" description="Strongly increases affinity for RHO." evidence="7">
    <original>LVF</original>
    <variation>AAA</variation>
    <location>
        <begin position="374"/>
        <end position="376"/>
    </location>
</feature>
<feature type="sequence conflict" description="In Ref. 2; AAH16498." evidence="10" ref="2">
    <original>T</original>
    <variation>P</variation>
    <location>
        <position position="391"/>
    </location>
</feature>
<feature type="strand" evidence="14">
    <location>
        <begin position="13"/>
        <end position="17"/>
    </location>
</feature>
<feature type="strand" evidence="14">
    <location>
        <begin position="19"/>
        <end position="28"/>
    </location>
</feature>
<feature type="strand" evidence="14">
    <location>
        <begin position="30"/>
        <end position="34"/>
    </location>
</feature>
<feature type="strand" evidence="14">
    <location>
        <begin position="36"/>
        <end position="39"/>
    </location>
</feature>
<feature type="strand" evidence="14">
    <location>
        <begin position="42"/>
        <end position="48"/>
    </location>
</feature>
<feature type="turn" evidence="14">
    <location>
        <begin position="50"/>
        <end position="52"/>
    </location>
</feature>
<feature type="strand" evidence="14">
    <location>
        <begin position="53"/>
        <end position="55"/>
    </location>
</feature>
<feature type="strand" evidence="14">
    <location>
        <begin position="57"/>
        <end position="69"/>
    </location>
</feature>
<feature type="helix" evidence="14">
    <location>
        <begin position="71"/>
        <end position="76"/>
    </location>
</feature>
<feature type="strand" evidence="14">
    <location>
        <begin position="83"/>
        <end position="93"/>
    </location>
</feature>
<feature type="helix" evidence="14">
    <location>
        <begin position="103"/>
        <end position="111"/>
    </location>
</feature>
<feature type="strand" evidence="14">
    <location>
        <begin position="116"/>
        <end position="121"/>
    </location>
</feature>
<feature type="strand" evidence="14">
    <location>
        <begin position="131"/>
        <end position="133"/>
    </location>
</feature>
<feature type="strand" evidence="14">
    <location>
        <begin position="144"/>
        <end position="157"/>
    </location>
</feature>
<feature type="turn" evidence="13">
    <location>
        <begin position="159"/>
        <end position="162"/>
    </location>
</feature>
<feature type="turn" evidence="14">
    <location>
        <begin position="167"/>
        <end position="169"/>
    </location>
</feature>
<feature type="strand" evidence="14">
    <location>
        <begin position="171"/>
        <end position="178"/>
    </location>
</feature>
<feature type="strand" evidence="14">
    <location>
        <begin position="190"/>
        <end position="195"/>
    </location>
</feature>
<feature type="strand" evidence="14">
    <location>
        <begin position="204"/>
        <end position="211"/>
    </location>
</feature>
<feature type="strand" evidence="14">
    <location>
        <begin position="213"/>
        <end position="216"/>
    </location>
</feature>
<feature type="strand" evidence="14">
    <location>
        <begin position="221"/>
        <end position="229"/>
    </location>
</feature>
<feature type="strand" evidence="14">
    <location>
        <begin position="231"/>
        <end position="233"/>
    </location>
</feature>
<feature type="strand" evidence="14">
    <location>
        <begin position="235"/>
        <end position="265"/>
    </location>
</feature>
<feature type="strand" evidence="14">
    <location>
        <begin position="273"/>
        <end position="281"/>
    </location>
</feature>
<feature type="helix" evidence="14">
    <location>
        <begin position="285"/>
        <end position="288"/>
    </location>
</feature>
<feature type="strand" evidence="14">
    <location>
        <begin position="295"/>
        <end position="297"/>
    </location>
</feature>
<feature type="strand" evidence="14">
    <location>
        <begin position="300"/>
        <end position="302"/>
    </location>
</feature>
<feature type="strand" evidence="14">
    <location>
        <begin position="323"/>
        <end position="337"/>
    </location>
</feature>
<feature type="strand" evidence="14">
    <location>
        <begin position="345"/>
        <end position="358"/>
    </location>
</feature>
<accession>P20443</accession>
<accession>Q91W62</accession>
<proteinExistence type="evidence at protein level"/>
<evidence type="ECO:0000250" key="1">
    <source>
        <dbReference type="UniProtKB" id="P08168"/>
    </source>
</evidence>
<evidence type="ECO:0000250" key="2">
    <source>
        <dbReference type="UniProtKB" id="P10523"/>
    </source>
</evidence>
<evidence type="ECO:0000250" key="3">
    <source>
        <dbReference type="UniProtKB" id="P15887"/>
    </source>
</evidence>
<evidence type="ECO:0000256" key="4">
    <source>
        <dbReference type="SAM" id="MobiDB-lite"/>
    </source>
</evidence>
<evidence type="ECO:0000269" key="5">
    <source>
    </source>
</evidence>
<evidence type="ECO:0000269" key="6">
    <source>
    </source>
</evidence>
<evidence type="ECO:0000269" key="7">
    <source>
    </source>
</evidence>
<evidence type="ECO:0000269" key="8">
    <source>
    </source>
</evidence>
<evidence type="ECO:0000269" key="9">
    <source>
    </source>
</evidence>
<evidence type="ECO:0000305" key="10"/>
<evidence type="ECO:0007744" key="11">
    <source>
        <dbReference type="PDB" id="4ZWJ"/>
    </source>
</evidence>
<evidence type="ECO:0007744" key="12">
    <source>
        <dbReference type="PDB" id="5W0P"/>
    </source>
</evidence>
<evidence type="ECO:0007829" key="13">
    <source>
        <dbReference type="PDB" id="4ZWJ"/>
    </source>
</evidence>
<evidence type="ECO:0007829" key="14">
    <source>
        <dbReference type="PDB" id="5W0P"/>
    </source>
</evidence>
<comment type="function">
    <text evidence="5 9">Binds to photoactivated, phosphorylated RHO and terminates RHO signaling via G-proteins by competing with G-proteins for the same binding site on RHO (PubMed:16421323, PubMed:9333241). May play a role in preventing light-dependent degeneration of retinal photoreceptor cells (PubMed:16421323).</text>
</comment>
<comment type="subunit">
    <text evidence="6 7 8">Monomer. Homodimer. Homotetramer (PubMed:21288033). Interacts with RHO (via the phosphorylated C-terminus) (PubMed:26200343, PubMed:28753425).</text>
</comment>
<comment type="subcellular location">
    <subcellularLocation>
        <location evidence="5">Cell projection</location>
        <location evidence="5">Cilium</location>
        <location evidence="5">Photoreceptor outer segment</location>
    </subcellularLocation>
    <subcellularLocation>
        <location evidence="5">Membrane</location>
        <topology evidence="5">Peripheral membrane protein</topology>
    </subcellularLocation>
    <text evidence="1 2">Highly expressed in photoreceptor outer segments in light-exposed retina. Evenly distributed throughout rod photoreceptor cells in dark-adapted retina (By similarity). Predominantly dectected at the proximal region of photoreceptor outer segments, near disk membranes.</text>
</comment>
<comment type="tissue specificity">
    <text evidence="5 9">Detected in retina (at protein level).</text>
</comment>
<comment type="domain">
    <text evidence="1">The C-terminus interferes with binding to non-phosphorylated RHO. Interaction with phosphorylated RHO triggers displacement of the C-terminus and leads to a conformation change that mediates high-affinity RHO binding.</text>
</comment>
<comment type="disruption phenotype">
    <text evidence="5 9">The morphology of the retina is not affected when mice are kept in constant darkness. When mice are exposed to alternating 12 hour light and dark cycles, the rod photoreceptor outer segments are about 25% shorter than in wild-type, and the photoreceptor outer segments appear somewhat disordered (PubMed:9333241). After one year exposure to alternating 12 hour light and dark cycles, there are clear signs of photoreceptor degeneration with about 50% reduction in the number of photoreceptor nuclei in the outer layer of the retina (PubMed:16421323). Rod photoreceptor cells show normal flash sensitivity, but display prolonged RHO signaling, due to a strongly decreased rate of deactivation (PubMed:16421323, PubMed:9333241).</text>
</comment>
<comment type="similarity">
    <text evidence="10">Belongs to the arrestin family.</text>
</comment>